<gene>
    <name type="primary">SMB</name>
    <name type="synonym">NAC033</name>
    <name type="ordered locus">At1g79580</name>
    <name type="ORF">F20B17.1</name>
</gene>
<protein>
    <recommendedName>
        <fullName>Protein SOMBRERO</fullName>
    </recommendedName>
    <alternativeName>
        <fullName>NAC domain-containing protein 33</fullName>
        <shortName>ANAC033</shortName>
    </alternativeName>
</protein>
<proteinExistence type="evidence at protein level"/>
<evidence type="ECO:0000255" key="1">
    <source>
        <dbReference type="PROSITE-ProRule" id="PRU00353"/>
    </source>
</evidence>
<evidence type="ECO:0000256" key="2">
    <source>
        <dbReference type="SAM" id="MobiDB-lite"/>
    </source>
</evidence>
<evidence type="ECO:0000269" key="3">
    <source>
    </source>
</evidence>
<evidence type="ECO:0000269" key="4">
    <source>
    </source>
</evidence>
<evidence type="ECO:0000305" key="5"/>
<keyword id="KW-0217">Developmental protein</keyword>
<keyword id="KW-0238">DNA-binding</keyword>
<keyword id="KW-0539">Nucleus</keyword>
<keyword id="KW-1185">Reference proteome</keyword>
<keyword id="KW-0804">Transcription</keyword>
<keyword id="KW-0805">Transcription regulation</keyword>
<organism>
    <name type="scientific">Arabidopsis thaliana</name>
    <name type="common">Mouse-ear cress</name>
    <dbReference type="NCBI Taxonomy" id="3702"/>
    <lineage>
        <taxon>Eukaryota</taxon>
        <taxon>Viridiplantae</taxon>
        <taxon>Streptophyta</taxon>
        <taxon>Embryophyta</taxon>
        <taxon>Tracheophyta</taxon>
        <taxon>Spermatophyta</taxon>
        <taxon>Magnoliopsida</taxon>
        <taxon>eudicotyledons</taxon>
        <taxon>Gunneridae</taxon>
        <taxon>Pentapetalae</taxon>
        <taxon>rosids</taxon>
        <taxon>malvids</taxon>
        <taxon>Brassicales</taxon>
        <taxon>Brassicaceae</taxon>
        <taxon>Camelineae</taxon>
        <taxon>Arabidopsis</taxon>
    </lineage>
</organism>
<accession>Q9MA17</accession>
<name>SMB_ARATH</name>
<reference key="1">
    <citation type="journal article" date="2000" name="Nature">
        <title>Sequence and analysis of chromosome 1 of the plant Arabidopsis thaliana.</title>
        <authorList>
            <person name="Theologis A."/>
            <person name="Ecker J.R."/>
            <person name="Palm C.J."/>
            <person name="Federspiel N.A."/>
            <person name="Kaul S."/>
            <person name="White O."/>
            <person name="Alonso J."/>
            <person name="Altafi H."/>
            <person name="Araujo R."/>
            <person name="Bowman C.L."/>
            <person name="Brooks S.Y."/>
            <person name="Buehler E."/>
            <person name="Chan A."/>
            <person name="Chao Q."/>
            <person name="Chen H."/>
            <person name="Cheuk R.F."/>
            <person name="Chin C.W."/>
            <person name="Chung M.K."/>
            <person name="Conn L."/>
            <person name="Conway A.B."/>
            <person name="Conway A.R."/>
            <person name="Creasy T.H."/>
            <person name="Dewar K."/>
            <person name="Dunn P."/>
            <person name="Etgu P."/>
            <person name="Feldblyum T.V."/>
            <person name="Feng J.-D."/>
            <person name="Fong B."/>
            <person name="Fujii C.Y."/>
            <person name="Gill J.E."/>
            <person name="Goldsmith A.D."/>
            <person name="Haas B."/>
            <person name="Hansen N.F."/>
            <person name="Hughes B."/>
            <person name="Huizar L."/>
            <person name="Hunter J.L."/>
            <person name="Jenkins J."/>
            <person name="Johnson-Hopson C."/>
            <person name="Khan S."/>
            <person name="Khaykin E."/>
            <person name="Kim C.J."/>
            <person name="Koo H.L."/>
            <person name="Kremenetskaia I."/>
            <person name="Kurtz D.B."/>
            <person name="Kwan A."/>
            <person name="Lam B."/>
            <person name="Langin-Hooper S."/>
            <person name="Lee A."/>
            <person name="Lee J.M."/>
            <person name="Lenz C.A."/>
            <person name="Li J.H."/>
            <person name="Li Y.-P."/>
            <person name="Lin X."/>
            <person name="Liu S.X."/>
            <person name="Liu Z.A."/>
            <person name="Luros J.S."/>
            <person name="Maiti R."/>
            <person name="Marziali A."/>
            <person name="Militscher J."/>
            <person name="Miranda M."/>
            <person name="Nguyen M."/>
            <person name="Nierman W.C."/>
            <person name="Osborne B.I."/>
            <person name="Pai G."/>
            <person name="Peterson J."/>
            <person name="Pham P.K."/>
            <person name="Rizzo M."/>
            <person name="Rooney T."/>
            <person name="Rowley D."/>
            <person name="Sakano H."/>
            <person name="Salzberg S.L."/>
            <person name="Schwartz J.R."/>
            <person name="Shinn P."/>
            <person name="Southwick A.M."/>
            <person name="Sun H."/>
            <person name="Tallon L.J."/>
            <person name="Tambunga G."/>
            <person name="Toriumi M.J."/>
            <person name="Town C.D."/>
            <person name="Utterback T."/>
            <person name="Van Aken S."/>
            <person name="Vaysberg M."/>
            <person name="Vysotskaia V.S."/>
            <person name="Walker M."/>
            <person name="Wu D."/>
            <person name="Yu G."/>
            <person name="Fraser C.M."/>
            <person name="Venter J.C."/>
            <person name="Davis R.W."/>
        </authorList>
    </citation>
    <scope>NUCLEOTIDE SEQUENCE [LARGE SCALE GENOMIC DNA]</scope>
    <source>
        <strain>cv. Columbia</strain>
    </source>
</reference>
<reference key="2">
    <citation type="journal article" date="2017" name="Plant J.">
        <title>Araport11: a complete reannotation of the Arabidopsis thaliana reference genome.</title>
        <authorList>
            <person name="Cheng C.Y."/>
            <person name="Krishnakumar V."/>
            <person name="Chan A.P."/>
            <person name="Thibaud-Nissen F."/>
            <person name="Schobel S."/>
            <person name="Town C.D."/>
        </authorList>
    </citation>
    <scope>GENOME REANNOTATION</scope>
    <source>
        <strain>cv. Columbia</strain>
    </source>
</reference>
<reference key="3">
    <citation type="journal article" date="2004" name="Genome Res.">
        <title>Whole genome sequence comparisons and 'full-length' cDNA sequences: a combined approach to evaluate and improve Arabidopsis genome annotation.</title>
        <authorList>
            <person name="Castelli V."/>
            <person name="Aury J.-M."/>
            <person name="Jaillon O."/>
            <person name="Wincker P."/>
            <person name="Clepet C."/>
            <person name="Menard M."/>
            <person name="Cruaud C."/>
            <person name="Quetier F."/>
            <person name="Scarpelli C."/>
            <person name="Schaechter V."/>
            <person name="Temple G."/>
            <person name="Caboche M."/>
            <person name="Weissenbach J."/>
            <person name="Salanoubat M."/>
        </authorList>
    </citation>
    <scope>NUCLEOTIDE SEQUENCE [LARGE SCALE MRNA]</scope>
    <source>
        <strain>cv. Columbia</strain>
    </source>
</reference>
<reference key="4">
    <citation type="journal article" date="2003" name="DNA Res.">
        <title>Comprehensive analysis of NAC family genes in Oryza sativa and Arabidopsis thaliana.</title>
        <authorList>
            <person name="Ooka H."/>
            <person name="Satoh K."/>
            <person name="Doi K."/>
            <person name="Nagata T."/>
            <person name="Otomo Y."/>
            <person name="Murakami K."/>
            <person name="Matsubara K."/>
            <person name="Osato N."/>
            <person name="Kawai J."/>
            <person name="Carninci P."/>
            <person name="Hayashizaki Y."/>
            <person name="Suzuki K."/>
            <person name="Kojima K."/>
            <person name="Takahara Y."/>
            <person name="Yamamoto K."/>
            <person name="Kikuchi S."/>
        </authorList>
    </citation>
    <scope>GENE FAMILY</scope>
    <scope>NOMENCLATURE</scope>
</reference>
<reference key="5">
    <citation type="journal article" date="2008" name="Dev. Cell">
        <title>The NAC domain transcription factors FEZ and SOMBRERO control the orientation of cell division plane in Arabidopsis root stem cells.</title>
        <authorList>
            <person name="Willemsen V."/>
            <person name="Bauch M."/>
            <person name="Bennett T."/>
            <person name="Campilho A."/>
            <person name="Wolkenfelt H."/>
            <person name="Xu J."/>
            <person name="Haseloff J."/>
            <person name="Scheres B."/>
        </authorList>
    </citation>
    <scope>FUNCTION</scope>
    <scope>TISSUE SPECIFICITY</scope>
    <scope>SUBCELLULAR LOCATION</scope>
    <scope>INDUCTION BY FEZ</scope>
    <scope>DEVELOPMENTAL STAGE</scope>
    <scope>DISRUPTION PHENOTYPE</scope>
    <scope>MUTAGENESIS OF ARG-22 AND GLU-27</scope>
</reference>
<reference key="6">
    <citation type="journal article" date="2010" name="Plant Cell">
        <title>SOMBRERO, BEARSKIN1, and BEARSKIN2 regulate root cap maturation in Arabidopsis.</title>
        <authorList>
            <person name="Bennett T."/>
            <person name="van den Toorn A."/>
            <person name="Sanchez-Perez G.F."/>
            <person name="Campilho A."/>
            <person name="Willemsen V."/>
            <person name="Snel B."/>
            <person name="Scheres B."/>
        </authorList>
    </citation>
    <scope>FUNCTION</scope>
    <scope>TISSUE SPECIFICITY</scope>
    <scope>DEVELOPMENTAL STAGE</scope>
    <scope>DISRUPTION PHENOTYPE</scope>
</reference>
<sequence length="371" mass="42382">MEIGSSSTVAGGGQLSVPPGFRFHPTEEELLYYYLKKKVSYEPIDLDVIREVDLNKLEPWELKEKCRIGSGPQNEWYFFSHKDKKYPTGTRTNRATAAGFWKATGRDKSIHLNSSKKIGLRKTLVFYTGRAPHGQKTEWIMHEYRLDDSENEIQEDGWVVCRVFKKKNHFRGFHQEQEQDHHHHHQYISTNNDHDHHHHIDSNSNNHSPLILHPLDHHHHHHHIGRQIHMPLHEFANTLSHGSMHLPQLFSPDSAAAAAAAAASAQPFVSPINTTDIECSQNLLRLTSNNNYGGDWSFLDKLLTTGNMNQQQQQQVQNHQAKCFGDLSNNDNNDQADHLGNNNGGSSSSPVNQRFPFHYLGNDANLLKFPK</sequence>
<feature type="chain" id="PRO_0000394192" description="Protein SOMBRERO">
    <location>
        <begin position="1"/>
        <end position="371"/>
    </location>
</feature>
<feature type="domain" description="NAC" evidence="1">
    <location>
        <begin position="17"/>
        <end position="166"/>
    </location>
</feature>
<feature type="DNA-binding region" evidence="1">
    <location>
        <begin position="118"/>
        <end position="172"/>
    </location>
</feature>
<feature type="region of interest" description="Disordered" evidence="2">
    <location>
        <begin position="176"/>
        <end position="213"/>
    </location>
</feature>
<feature type="region of interest" description="Disordered" evidence="2">
    <location>
        <begin position="316"/>
        <end position="355"/>
    </location>
</feature>
<feature type="compositionally biased region" description="Basic and acidic residues" evidence="2">
    <location>
        <begin position="192"/>
        <end position="201"/>
    </location>
</feature>
<feature type="compositionally biased region" description="Low complexity" evidence="2">
    <location>
        <begin position="202"/>
        <end position="213"/>
    </location>
</feature>
<feature type="compositionally biased region" description="Low complexity" evidence="2">
    <location>
        <begin position="340"/>
        <end position="349"/>
    </location>
</feature>
<feature type="mutagenesis site" description="Additional root cap layers." evidence="3">
    <original>R</original>
    <variation>W</variation>
    <location>
        <position position="22"/>
    </location>
</feature>
<feature type="mutagenesis site" description="Additional root cap layers." evidence="3">
    <original>E</original>
    <variation>K</variation>
    <location>
        <position position="27"/>
    </location>
</feature>
<comment type="function">
    <text evidence="3 4">Transcription regulator. Together with BRN1 and BRN2, regulates cellular maturation of root cap. Represses stem cell-like divisions in the root cap daughter cells, and thus promotes daughter cell fate. Inhibits expression of its positive regulator FEZ in a feedback loop for controlled switches in cell division plane. Promotes the expression of genes involved in secondary cell walls (SCW) biosynthesis.</text>
</comment>
<comment type="subcellular location">
    <subcellularLocation>
        <location evidence="1 3">Nucleus</location>
    </subcellularLocation>
</comment>
<comment type="tissue specificity">
    <text evidence="3 4">Accumulates in maturing root cap cells, in both COL and LRC cells.</text>
</comment>
<comment type="developmental stage">
    <text evidence="3 4">First expressed at early heart stage onward in all root basal daughter cells resulting from horizontal divisions in the COL progenitors and is later maintained in these cells. Present in root stem cell daughters and accumulates in maturing root cap layers. Detectable from very early stages of lateral root development.</text>
</comment>
<comment type="induction">
    <text evidence="3">By FEZ in oriented-divised root cap stem cells.</text>
</comment>
<comment type="domain">
    <text>The NAC domain includes a DNA-binding domain and a dimerization domain.</text>
</comment>
<comment type="disruption phenotype">
    <text evidence="3 4">Additional root cap layers; increased number of columella (COL) and lateral root cap (LRC) cell layers in the mature embryo and in the postembryonic state. Lateral cap cells continue to divide and fail to detach from the root.</text>
</comment>
<comment type="sequence caution" evidence="5">
    <conflict type="frameshift">
        <sequence resource="EMBL" id="BX816756"/>
    </conflict>
</comment>
<dbReference type="EMBL" id="AC010793">
    <property type="protein sequence ID" value="AAF68129.1"/>
    <property type="molecule type" value="Genomic_DNA"/>
</dbReference>
<dbReference type="EMBL" id="CP002684">
    <property type="protein sequence ID" value="AEE36266.1"/>
    <property type="molecule type" value="Genomic_DNA"/>
</dbReference>
<dbReference type="EMBL" id="CP002684">
    <property type="protein sequence ID" value="AEE36267.1"/>
    <property type="molecule type" value="Genomic_DNA"/>
</dbReference>
<dbReference type="EMBL" id="CP002684">
    <property type="protein sequence ID" value="AEE36268.1"/>
    <property type="molecule type" value="Genomic_DNA"/>
</dbReference>
<dbReference type="EMBL" id="CP002684">
    <property type="protein sequence ID" value="ANM61091.1"/>
    <property type="molecule type" value="Genomic_DNA"/>
</dbReference>
<dbReference type="EMBL" id="CP002684">
    <property type="protein sequence ID" value="ANM61092.1"/>
    <property type="molecule type" value="Genomic_DNA"/>
</dbReference>
<dbReference type="EMBL" id="BX816756">
    <property type="status" value="NOT_ANNOTATED_CDS"/>
    <property type="molecule type" value="mRNA"/>
</dbReference>
<dbReference type="RefSeq" id="NP_001319416.1">
    <property type="nucleotide sequence ID" value="NM_001334893.1"/>
</dbReference>
<dbReference type="RefSeq" id="NP_001323331.1">
    <property type="nucleotide sequence ID" value="NM_001334894.1"/>
</dbReference>
<dbReference type="RefSeq" id="NP_178076.1">
    <property type="nucleotide sequence ID" value="NM_106606.2"/>
</dbReference>
<dbReference type="RefSeq" id="NP_974178.1">
    <property type="nucleotide sequence ID" value="NM_202449.2"/>
</dbReference>
<dbReference type="RefSeq" id="NP_974179.1">
    <property type="nucleotide sequence ID" value="NM_202450.2"/>
</dbReference>
<dbReference type="SMR" id="Q9MA17"/>
<dbReference type="BioGRID" id="29515">
    <property type="interactions" value="1"/>
</dbReference>
<dbReference type="IntAct" id="Q9MA17">
    <property type="interactions" value="1"/>
</dbReference>
<dbReference type="STRING" id="3702.Q9MA17"/>
<dbReference type="PaxDb" id="3702-AT1G79580.1"/>
<dbReference type="ProteomicsDB" id="226744"/>
<dbReference type="EnsemblPlants" id="AT1G79580.1">
    <property type="protein sequence ID" value="AT1G79580.1"/>
    <property type="gene ID" value="AT1G79580"/>
</dbReference>
<dbReference type="EnsemblPlants" id="AT1G79580.2">
    <property type="protein sequence ID" value="AT1G79580.2"/>
    <property type="gene ID" value="AT1G79580"/>
</dbReference>
<dbReference type="EnsemblPlants" id="AT1G79580.3">
    <property type="protein sequence ID" value="AT1G79580.3"/>
    <property type="gene ID" value="AT1G79580"/>
</dbReference>
<dbReference type="EnsemblPlants" id="AT1G79580.4">
    <property type="protein sequence ID" value="AT1G79580.4"/>
    <property type="gene ID" value="AT1G79580"/>
</dbReference>
<dbReference type="EnsemblPlants" id="AT1G79580.5">
    <property type="protein sequence ID" value="AT1G79580.5"/>
    <property type="gene ID" value="AT1G79580"/>
</dbReference>
<dbReference type="GeneID" id="844296"/>
<dbReference type="Gramene" id="AT1G79580.1">
    <property type="protein sequence ID" value="AT1G79580.1"/>
    <property type="gene ID" value="AT1G79580"/>
</dbReference>
<dbReference type="Gramene" id="AT1G79580.2">
    <property type="protein sequence ID" value="AT1G79580.2"/>
    <property type="gene ID" value="AT1G79580"/>
</dbReference>
<dbReference type="Gramene" id="AT1G79580.3">
    <property type="protein sequence ID" value="AT1G79580.3"/>
    <property type="gene ID" value="AT1G79580"/>
</dbReference>
<dbReference type="Gramene" id="AT1G79580.4">
    <property type="protein sequence ID" value="AT1G79580.4"/>
    <property type="gene ID" value="AT1G79580"/>
</dbReference>
<dbReference type="Gramene" id="AT1G79580.5">
    <property type="protein sequence ID" value="AT1G79580.5"/>
    <property type="gene ID" value="AT1G79580"/>
</dbReference>
<dbReference type="KEGG" id="ath:AT1G79580"/>
<dbReference type="Araport" id="AT1G79580"/>
<dbReference type="TAIR" id="AT1G79580">
    <property type="gene designation" value="SMB"/>
</dbReference>
<dbReference type="eggNOG" id="ENOG502QT1N">
    <property type="taxonomic scope" value="Eukaryota"/>
</dbReference>
<dbReference type="HOGENOM" id="CLU_035664_1_4_1"/>
<dbReference type="InParanoid" id="Q9MA17"/>
<dbReference type="OMA" id="HIGRQIH"/>
<dbReference type="OrthoDB" id="1667455at2759"/>
<dbReference type="PhylomeDB" id="Q9MA17"/>
<dbReference type="PRO" id="PR:Q9MA17"/>
<dbReference type="Proteomes" id="UP000006548">
    <property type="component" value="Chromosome 1"/>
</dbReference>
<dbReference type="ExpressionAtlas" id="Q9MA17">
    <property type="expression patterns" value="baseline and differential"/>
</dbReference>
<dbReference type="GO" id="GO:0005634">
    <property type="term" value="C:nucleus"/>
    <property type="evidence" value="ECO:0000314"/>
    <property type="project" value="TAIR"/>
</dbReference>
<dbReference type="GO" id="GO:0003677">
    <property type="term" value="F:DNA binding"/>
    <property type="evidence" value="ECO:0007669"/>
    <property type="project" value="UniProtKB-KW"/>
</dbReference>
<dbReference type="GO" id="GO:0003700">
    <property type="term" value="F:DNA-binding transcription factor activity"/>
    <property type="evidence" value="ECO:0000250"/>
    <property type="project" value="TAIR"/>
</dbReference>
<dbReference type="GO" id="GO:0009834">
    <property type="term" value="P:plant-type secondary cell wall biogenesis"/>
    <property type="evidence" value="ECO:0000315"/>
    <property type="project" value="UniProtKB"/>
</dbReference>
<dbReference type="GO" id="GO:0010455">
    <property type="term" value="P:positive regulation of cell fate commitment"/>
    <property type="evidence" value="ECO:0000315"/>
    <property type="project" value="TAIR"/>
</dbReference>
<dbReference type="GO" id="GO:0003002">
    <property type="term" value="P:regionalization"/>
    <property type="evidence" value="ECO:0000315"/>
    <property type="project" value="TAIR"/>
</dbReference>
<dbReference type="GO" id="GO:0006355">
    <property type="term" value="P:regulation of DNA-templated transcription"/>
    <property type="evidence" value="ECO:0000315"/>
    <property type="project" value="UniProtKB"/>
</dbReference>
<dbReference type="GO" id="GO:0048829">
    <property type="term" value="P:root cap development"/>
    <property type="evidence" value="ECO:0000315"/>
    <property type="project" value="UniProtKB"/>
</dbReference>
<dbReference type="FunFam" id="2.170.150.80:FF:000003">
    <property type="entry name" value="NAC domain-containing protein"/>
    <property type="match status" value="1"/>
</dbReference>
<dbReference type="Gene3D" id="2.170.150.80">
    <property type="entry name" value="NAC domain"/>
    <property type="match status" value="1"/>
</dbReference>
<dbReference type="InterPro" id="IPR003441">
    <property type="entry name" value="NAC-dom"/>
</dbReference>
<dbReference type="InterPro" id="IPR036093">
    <property type="entry name" value="NAC_dom_sf"/>
</dbReference>
<dbReference type="PANTHER" id="PTHR31744">
    <property type="entry name" value="PROTEIN CUP-SHAPED COTYLEDON 2-RELATED"/>
    <property type="match status" value="1"/>
</dbReference>
<dbReference type="PANTHER" id="PTHR31744:SF212">
    <property type="entry name" value="PROTEIN SOMBRERO-LIKE ISOFORM X2"/>
    <property type="match status" value="1"/>
</dbReference>
<dbReference type="Pfam" id="PF02365">
    <property type="entry name" value="NAM"/>
    <property type="match status" value="1"/>
</dbReference>
<dbReference type="SUPFAM" id="SSF101941">
    <property type="entry name" value="NAC domain"/>
    <property type="match status" value="1"/>
</dbReference>
<dbReference type="PROSITE" id="PS51005">
    <property type="entry name" value="NAC"/>
    <property type="match status" value="1"/>
</dbReference>